<accession>C0HKE4</accession>
<accession>P10812</accession>
<accession>P22752</accession>
<accession>Q149U0</accession>
<accession>Q5SZZ2</accession>
<organism>
    <name type="scientific">Mus musculus</name>
    <name type="common">Mouse</name>
    <dbReference type="NCBI Taxonomy" id="10090"/>
    <lineage>
        <taxon>Eukaryota</taxon>
        <taxon>Metazoa</taxon>
        <taxon>Chordata</taxon>
        <taxon>Craniata</taxon>
        <taxon>Vertebrata</taxon>
        <taxon>Euteleostomi</taxon>
        <taxon>Mammalia</taxon>
        <taxon>Eutheria</taxon>
        <taxon>Euarchontoglires</taxon>
        <taxon>Glires</taxon>
        <taxon>Rodentia</taxon>
        <taxon>Myomorpha</taxon>
        <taxon>Muroidea</taxon>
        <taxon>Muridae</taxon>
        <taxon>Murinae</taxon>
        <taxon>Mus</taxon>
        <taxon>Mus</taxon>
    </lineage>
</organism>
<dbReference type="EMBL" id="AY158917">
    <property type="protein sequence ID" value="AAO06227.1"/>
    <property type="molecule type" value="Genomic_DNA"/>
</dbReference>
<dbReference type="EMBL" id="AK028026">
    <property type="protein sequence ID" value="BAC25706.1"/>
    <property type="molecule type" value="mRNA"/>
</dbReference>
<dbReference type="EMBL" id="AL592149">
    <property type="protein sequence ID" value="CAI24893.1"/>
    <property type="molecule type" value="Genomic_DNA"/>
</dbReference>
<dbReference type="EMBL" id="BC058544">
    <property type="protein sequence ID" value="AAH58544.1"/>
    <property type="molecule type" value="mRNA"/>
</dbReference>
<dbReference type="EMBL" id="BC076498">
    <property type="protein sequence ID" value="AAH76498.1"/>
    <property type="molecule type" value="mRNA"/>
</dbReference>
<dbReference type="CCDS" id="CCDS26348.1"/>
<dbReference type="RefSeq" id="NP_835494.1">
    <property type="nucleotide sequence ID" value="NM_178187.4"/>
</dbReference>
<dbReference type="SMR" id="C0HKE4"/>
<dbReference type="FunCoup" id="C0HKE4">
    <property type="interactions" value="848"/>
</dbReference>
<dbReference type="iPTMnet" id="C0HKE4"/>
<dbReference type="jPOST" id="C0HKE4"/>
<dbReference type="Pumba" id="C0HKE4"/>
<dbReference type="Antibodypedia" id="72464">
    <property type="antibodies" value="208 antibodies from 18 providers"/>
</dbReference>
<dbReference type="DNASU" id="319172"/>
<dbReference type="Ensembl" id="ENSMUST00000070124.5">
    <property type="protein sequence ID" value="ENSMUSP00000088285.3"/>
    <property type="gene ID" value="ENSMUSG00000071516.3"/>
</dbReference>
<dbReference type="Ensembl" id="ENSMUST00000078369.3">
    <property type="protein sequence ID" value="ENSMUSP00000077477.2"/>
    <property type="gene ID" value="ENSMUSG00000061615.3"/>
</dbReference>
<dbReference type="Ensembl" id="ENSMUST00000081342.7">
    <property type="protein sequence ID" value="ENSMUSP00000080088.6"/>
    <property type="gene ID" value="ENSMUSG00000094777.3"/>
</dbReference>
<dbReference type="Ensembl" id="ENSMUST00000090776.7">
    <property type="protein sequence ID" value="ENSMUSP00000088281.5"/>
    <property type="gene ID" value="ENSMUSG00000071478.7"/>
</dbReference>
<dbReference type="Ensembl" id="ENSMUST00000091741.6">
    <property type="protein sequence ID" value="ENSMUSP00000089335.5"/>
    <property type="gene ID" value="ENSMUSG00000069301.6"/>
</dbReference>
<dbReference type="Ensembl" id="ENSMUST00000091745.6">
    <property type="protein sequence ID" value="ENSMUSP00000089339.6"/>
    <property type="gene ID" value="ENSMUSG00000094248.2"/>
</dbReference>
<dbReference type="Ensembl" id="ENSMUST00000091751.3">
    <property type="protein sequence ID" value="ENSMUSP00000089345.3"/>
    <property type="gene ID" value="ENSMUSG00000069309.3"/>
</dbReference>
<dbReference type="Ensembl" id="ENSMUST00000102969.6">
    <property type="protein sequence ID" value="ENSMUSP00000100034.4"/>
    <property type="gene ID" value="ENSMUSG00000069272.7"/>
</dbReference>
<dbReference type="Ensembl" id="ENSMUST00000171127.4">
    <property type="protein sequence ID" value="ENSMUSP00000127684.2"/>
    <property type="gene ID" value="ENSMUSG00000069270.7"/>
</dbReference>
<dbReference type="GeneID" id="319166"/>
<dbReference type="KEGG" id="mmu:319164"/>
<dbReference type="KEGG" id="mmu:319165"/>
<dbReference type="KEGG" id="mmu:319166"/>
<dbReference type="KEGG" id="mmu:319167"/>
<dbReference type="KEGG" id="mmu:319170"/>
<dbReference type="KEGG" id="mmu:319171"/>
<dbReference type="KEGG" id="mmu:319172"/>
<dbReference type="KEGG" id="mmu:319191"/>
<dbReference type="KEGG" id="mmu:665433"/>
<dbReference type="AGR" id="MGI:2448290"/>
<dbReference type="CTD" id="3012"/>
<dbReference type="CTD" id="3013"/>
<dbReference type="CTD" id="319170"/>
<dbReference type="CTD" id="319171"/>
<dbReference type="CTD" id="665433"/>
<dbReference type="CTD" id="8329"/>
<dbReference type="CTD" id="8334"/>
<dbReference type="CTD" id="8335"/>
<dbReference type="CTD" id="8969"/>
<dbReference type="MGI" id="MGI:2448290">
    <property type="gene designation" value="H2ac8"/>
</dbReference>
<dbReference type="VEuPathDB" id="HostDB:ENSMUSG00000061615"/>
<dbReference type="VEuPathDB" id="HostDB:ENSMUSG00000069270"/>
<dbReference type="VEuPathDB" id="HostDB:ENSMUSG00000069272"/>
<dbReference type="VEuPathDB" id="HostDB:ENSMUSG00000069301"/>
<dbReference type="VEuPathDB" id="HostDB:ENSMUSG00000069309"/>
<dbReference type="VEuPathDB" id="HostDB:ENSMUSG00000071478"/>
<dbReference type="VEuPathDB" id="HostDB:ENSMUSG00000071516"/>
<dbReference type="VEuPathDB" id="HostDB:ENSMUSG00000094248"/>
<dbReference type="VEuPathDB" id="HostDB:ENSMUSG00000094777"/>
<dbReference type="InParanoid" id="C0HKE4"/>
<dbReference type="OMA" id="TEDCRQT"/>
<dbReference type="OrthoDB" id="9610409at2759"/>
<dbReference type="Reactome" id="R-MMU-110330">
    <property type="pathway name" value="Recognition and association of DNA glycosylase with site containing an affected purine"/>
</dbReference>
<dbReference type="Reactome" id="R-MMU-110331">
    <property type="pathway name" value="Cleavage of the damaged purine"/>
</dbReference>
<dbReference type="Reactome" id="R-MMU-212300">
    <property type="pathway name" value="PRC2 methylates histones and DNA"/>
</dbReference>
<dbReference type="Reactome" id="R-MMU-2299718">
    <property type="pathway name" value="Condensation of Prophase Chromosomes"/>
</dbReference>
<dbReference type="Reactome" id="R-MMU-2559586">
    <property type="pathway name" value="DNA Damage/Telomere Stress Induced Senescence"/>
</dbReference>
<dbReference type="Reactome" id="R-MMU-3214815">
    <property type="pathway name" value="HDACs deacetylate histones"/>
</dbReference>
<dbReference type="Reactome" id="R-MMU-3214858">
    <property type="pathway name" value="RMTs methylate histone arginines"/>
</dbReference>
<dbReference type="Reactome" id="R-MMU-5689603">
    <property type="pathway name" value="UCH proteinases"/>
</dbReference>
<dbReference type="Reactome" id="R-MMU-5689880">
    <property type="pathway name" value="Ub-specific processing proteases"/>
</dbReference>
<dbReference type="Reactome" id="R-MMU-5689901">
    <property type="pathway name" value="Metalloprotease DUBs"/>
</dbReference>
<dbReference type="Reactome" id="R-MMU-606279">
    <property type="pathway name" value="Deposition of new CENPA-containing nucleosomes at the centromere"/>
</dbReference>
<dbReference type="Reactome" id="R-MMU-8936459">
    <property type="pathway name" value="RUNX1 regulates genes involved in megakaryocyte differentiation and platelet function"/>
</dbReference>
<dbReference type="Reactome" id="R-MMU-9670095">
    <property type="pathway name" value="Inhibition of DNA recombination at telomere"/>
</dbReference>
<dbReference type="Reactome" id="R-MMU-9841922">
    <property type="pathway name" value="MLL4 and MLL3 complexes regulate expression of PPARG target genes in adipogenesis and hepatic steatosis"/>
</dbReference>
<dbReference type="Reactome" id="R-MMU-9843940">
    <property type="pathway name" value="Regulation of endogenous retroelements by KRAB-ZFP proteins"/>
</dbReference>
<dbReference type="BioGRID-ORCS" id="319164">
    <property type="hits" value="12 hits in 61 CRISPR screens"/>
</dbReference>
<dbReference type="BioGRID-ORCS" id="319165">
    <property type="hits" value="11 hits in 41 CRISPR screens"/>
</dbReference>
<dbReference type="BioGRID-ORCS" id="319166">
    <property type="hits" value="13 hits in 57 CRISPR screens"/>
</dbReference>
<dbReference type="BioGRID-ORCS" id="319167">
    <property type="hits" value="12 hits in 44 CRISPR screens"/>
</dbReference>
<dbReference type="BioGRID-ORCS" id="319170">
    <property type="hits" value="14 hits in 59 CRISPR screens"/>
</dbReference>
<dbReference type="BioGRID-ORCS" id="319171">
    <property type="hits" value="14 hits in 43 CRISPR screens"/>
</dbReference>
<dbReference type="BioGRID-ORCS" id="319172">
    <property type="hits" value="9 hits in 57 CRISPR screens"/>
</dbReference>
<dbReference type="BioGRID-ORCS" id="319191">
    <property type="hits" value="10 hits in 58 CRISPR screens"/>
</dbReference>
<dbReference type="BioGRID-ORCS" id="665433">
    <property type="hits" value="10 hits in 42 CRISPR screens"/>
</dbReference>
<dbReference type="ChiTaRS" id="Hist1h2ae">
    <property type="organism name" value="mouse"/>
</dbReference>
<dbReference type="PRO" id="PR:C0HKE4"/>
<dbReference type="Proteomes" id="UP000000589">
    <property type="component" value="Chromosome 13"/>
</dbReference>
<dbReference type="RNAct" id="C0HKE4">
    <property type="molecule type" value="protein"/>
</dbReference>
<dbReference type="Bgee" id="ENSMUSG00000061615">
    <property type="expression patterns" value="Expressed in uterus and 49 other cell types or tissues"/>
</dbReference>
<dbReference type="ExpressionAtlas" id="C0HKE4">
    <property type="expression patterns" value="baseline and differential"/>
</dbReference>
<dbReference type="GO" id="GO:0000786">
    <property type="term" value="C:nucleosome"/>
    <property type="evidence" value="ECO:0007669"/>
    <property type="project" value="UniProtKB-KW"/>
</dbReference>
<dbReference type="GO" id="GO:0005634">
    <property type="term" value="C:nucleus"/>
    <property type="evidence" value="ECO:0007669"/>
    <property type="project" value="UniProtKB-SubCell"/>
</dbReference>
<dbReference type="GO" id="GO:0003677">
    <property type="term" value="F:DNA binding"/>
    <property type="evidence" value="ECO:0007669"/>
    <property type="project" value="UniProtKB-KW"/>
</dbReference>
<dbReference type="GO" id="GO:0046982">
    <property type="term" value="F:protein heterodimerization activity"/>
    <property type="evidence" value="ECO:0007669"/>
    <property type="project" value="InterPro"/>
</dbReference>
<dbReference type="GO" id="GO:0030527">
    <property type="term" value="F:structural constituent of chromatin"/>
    <property type="evidence" value="ECO:0007669"/>
    <property type="project" value="InterPro"/>
</dbReference>
<dbReference type="CDD" id="cd00074">
    <property type="entry name" value="HFD_H2A"/>
    <property type="match status" value="1"/>
</dbReference>
<dbReference type="FunFam" id="1.10.20.10:FF:000103">
    <property type="entry name" value="Histone H2A type 1"/>
    <property type="match status" value="1"/>
</dbReference>
<dbReference type="Gene3D" id="1.10.20.10">
    <property type="entry name" value="Histone, subunit A"/>
    <property type="match status" value="1"/>
</dbReference>
<dbReference type="InterPro" id="IPR009072">
    <property type="entry name" value="Histone-fold"/>
</dbReference>
<dbReference type="InterPro" id="IPR002119">
    <property type="entry name" value="Histone_H2A"/>
</dbReference>
<dbReference type="InterPro" id="IPR007125">
    <property type="entry name" value="Histone_H2A/H2B/H3"/>
</dbReference>
<dbReference type="InterPro" id="IPR032454">
    <property type="entry name" value="Histone_H2A_C"/>
</dbReference>
<dbReference type="InterPro" id="IPR032458">
    <property type="entry name" value="Histone_H2A_CS"/>
</dbReference>
<dbReference type="PANTHER" id="PTHR23430">
    <property type="entry name" value="HISTONE H2A"/>
    <property type="match status" value="1"/>
</dbReference>
<dbReference type="Pfam" id="PF00125">
    <property type="entry name" value="Histone"/>
    <property type="match status" value="1"/>
</dbReference>
<dbReference type="Pfam" id="PF16211">
    <property type="entry name" value="Histone_H2A_C"/>
    <property type="match status" value="1"/>
</dbReference>
<dbReference type="PRINTS" id="PR00620">
    <property type="entry name" value="HISTONEH2A"/>
</dbReference>
<dbReference type="SMART" id="SM00414">
    <property type="entry name" value="H2A"/>
    <property type="match status" value="1"/>
</dbReference>
<dbReference type="SUPFAM" id="SSF47113">
    <property type="entry name" value="Histone-fold"/>
    <property type="match status" value="1"/>
</dbReference>
<dbReference type="PROSITE" id="PS00046">
    <property type="entry name" value="HISTONE_H2A"/>
    <property type="match status" value="1"/>
</dbReference>
<evidence type="ECO:0000250" key="1">
    <source>
        <dbReference type="UniProtKB" id="P04908"/>
    </source>
</evidence>
<evidence type="ECO:0000250" key="2">
    <source>
        <dbReference type="UniProtKB" id="P0C0S5"/>
    </source>
</evidence>
<evidence type="ECO:0000250" key="3">
    <source>
        <dbReference type="UniProtKB" id="P0C0S8"/>
    </source>
</evidence>
<evidence type="ECO:0000250" key="4">
    <source>
        <dbReference type="UniProtKB" id="P0C170"/>
    </source>
</evidence>
<evidence type="ECO:0000256" key="5">
    <source>
        <dbReference type="SAM" id="MobiDB-lite"/>
    </source>
</evidence>
<evidence type="ECO:0000269" key="6">
    <source>
    </source>
</evidence>
<evidence type="ECO:0000269" key="7">
    <source>
    </source>
</evidence>
<evidence type="ECO:0000269" key="8">
    <source>
    </source>
</evidence>
<evidence type="ECO:0000269" key="9">
    <source>
    </source>
</evidence>
<evidence type="ECO:0000269" key="10">
    <source>
    </source>
</evidence>
<evidence type="ECO:0000269" key="11">
    <source>
    </source>
</evidence>
<evidence type="ECO:0000269" key="12">
    <source>
    </source>
</evidence>
<evidence type="ECO:0000269" key="13">
    <source>
    </source>
</evidence>
<evidence type="ECO:0000305" key="14"/>
<evidence type="ECO:0000312" key="15">
    <source>
        <dbReference type="EMBL" id="AAH58544.1"/>
    </source>
</evidence>
<evidence type="ECO:0000312" key="16">
    <source>
        <dbReference type="EMBL" id="AAH76498.1"/>
    </source>
</evidence>
<evidence type="ECO:0000312" key="17">
    <source>
        <dbReference type="EMBL" id="BAC25706.1"/>
    </source>
</evidence>
<evidence type="ECO:0000312" key="18">
    <source>
        <dbReference type="MGI" id="MGI:2448290"/>
    </source>
</evidence>
<sequence length="130" mass="14135">MSGRGKQGGKARAKAKTRSSRAGLQFPVGRVHRLLRKGNYSERVGAGAPVYLAAVLEYLTAEILELAGNAARDNKKTRIIPRHLQLAIRNDEELNKLLGRVTIAQGGVLPNIQAVLLPKKTESHHKAKGK</sequence>
<feature type="initiator methionine" description="Removed" evidence="4">
    <location>
        <position position="1"/>
    </location>
</feature>
<feature type="chain" id="PRO_0000439718" description="Histone H2A type 1-E">
    <location>
        <begin position="2"/>
        <end position="130"/>
    </location>
</feature>
<feature type="region of interest" description="Disordered" evidence="5">
    <location>
        <begin position="1"/>
        <end position="22"/>
    </location>
</feature>
<feature type="compositionally biased region" description="Basic residues" evidence="5">
    <location>
        <begin position="7"/>
        <end position="19"/>
    </location>
</feature>
<feature type="modified residue" description="N-acetylserine" evidence="13">
    <location>
        <position position="2"/>
    </location>
</feature>
<feature type="modified residue" description="Phosphoserine; by RPS6KA5" evidence="13">
    <location>
        <position position="2"/>
    </location>
</feature>
<feature type="modified residue" description="Citrulline; alternate" evidence="3">
    <location>
        <position position="4"/>
    </location>
</feature>
<feature type="modified residue" description="Symmetric dimethylarginine; by PRMT5; alternate" evidence="8">
    <location>
        <position position="4"/>
    </location>
</feature>
<feature type="modified residue" description="N6-(2-hydroxyisobutyryl)lysine; alternate" evidence="11">
    <location>
        <position position="6"/>
    </location>
</feature>
<feature type="modified residue" description="N6-(beta-hydroxybutyryl)lysine; alternate" evidence="12">
    <location>
        <position position="6"/>
    </location>
</feature>
<feature type="modified residue" description="N6-acetyllysine; alternate" evidence="13">
    <location>
        <position position="6"/>
    </location>
</feature>
<feature type="modified residue" description="N6-(2-hydroxyisobutyryl)lysine; alternate" evidence="11">
    <location>
        <position position="10"/>
    </location>
</feature>
<feature type="modified residue" description="N6-lactoyllysine; alternate" evidence="2">
    <location>
        <position position="10"/>
    </location>
</feature>
<feature type="modified residue" description="N6-succinyllysine; alternate" evidence="1">
    <location>
        <position position="10"/>
    </location>
</feature>
<feature type="modified residue" description="N6-(2-hydroxyisobutyryl)lysine; alternate" evidence="11">
    <location>
        <position position="37"/>
    </location>
</feature>
<feature type="modified residue" description="N6-(beta-hydroxybutyryl)lysine; alternate" evidence="12">
    <location>
        <position position="37"/>
    </location>
</feature>
<feature type="modified residue" description="N6-crotonyllysine; alternate" evidence="9">
    <location>
        <position position="37"/>
    </location>
</feature>
<feature type="modified residue" description="N6-(2-hydroxyisobutyryl)lysine" evidence="11">
    <location>
        <position position="75"/>
    </location>
</feature>
<feature type="modified residue" description="N6-(2-hydroxyisobutyryl)lysine" evidence="11">
    <location>
        <position position="76"/>
    </location>
</feature>
<feature type="modified residue" description="N6-(2-hydroxyisobutyryl)lysine; alternate" evidence="11">
    <location>
        <position position="96"/>
    </location>
</feature>
<feature type="modified residue" description="N6-glutaryllysine; alternate" evidence="3">
    <location>
        <position position="96"/>
    </location>
</feature>
<feature type="modified residue" description="N6-succinyllysine; alternate" evidence="1">
    <location>
        <position position="96"/>
    </location>
</feature>
<feature type="modified residue" description="N5-methylglutamine" evidence="10">
    <location>
        <position position="105"/>
    </location>
</feature>
<feature type="modified residue" description="N6-(2-hydroxyisobutyryl)lysine; alternate" evidence="11">
    <location>
        <position position="119"/>
    </location>
</feature>
<feature type="modified residue" description="N6-crotonyllysine; alternate" evidence="9">
    <location>
        <position position="119"/>
    </location>
</feature>
<feature type="modified residue" description="N6-glutaryllysine; alternate" evidence="3">
    <location>
        <position position="119"/>
    </location>
</feature>
<feature type="modified residue" description="N6-(beta-hydroxybutyryl)lysine; alternate" evidence="12">
    <location>
        <position position="120"/>
    </location>
</feature>
<feature type="modified residue" description="N6-crotonyllysine; alternate" evidence="3">
    <location>
        <position position="120"/>
    </location>
</feature>
<feature type="modified residue" description="N6-glutaryllysine; alternate" evidence="3">
    <location>
        <position position="120"/>
    </location>
</feature>
<feature type="modified residue" description="Phosphothreonine; by DCAF1" evidence="1">
    <location>
        <position position="121"/>
    </location>
</feature>
<feature type="modified residue" description="N6-(beta-hydroxybutyryl)lysine; alternate" evidence="12">
    <location>
        <position position="126"/>
    </location>
</feature>
<feature type="modified residue" description="N6-crotonyllysine; alternate" evidence="3">
    <location>
        <position position="126"/>
    </location>
</feature>
<feature type="modified residue" description="N6-glutaryllysine; alternate" evidence="3">
    <location>
        <position position="126"/>
    </location>
</feature>
<feature type="cross-link" description="Glycyl lysine isopeptide (Lys-Gly) (interchain with G-Cter in ubiquitin)" evidence="1">
    <location>
        <position position="14"/>
    </location>
</feature>
<feature type="cross-link" description="Glycyl lysine isopeptide (Lys-Gly) (interchain with G-Cter in ubiquitin)" evidence="1">
    <location>
        <position position="16"/>
    </location>
</feature>
<feature type="cross-link" description="Glycyl lysine isopeptide (Lys-Gly) (interchain with G-Cter in ubiquitin); alternate" evidence="6 7">
    <location>
        <position position="120"/>
    </location>
</feature>
<name>H2A1E_MOUSE</name>
<protein>
    <recommendedName>
        <fullName evidence="14">Histone H2A type 1-E</fullName>
    </recommendedName>
</protein>
<reference key="1">
    <citation type="journal article" date="2002" name="Genomics">
        <title>The human and mouse replication-dependent histone genes.</title>
        <authorList>
            <person name="Marzluff W.F."/>
            <person name="Gongidi P."/>
            <person name="Woods K.R."/>
            <person name="Jin J."/>
            <person name="Maltais L.J."/>
        </authorList>
    </citation>
    <scope>NUCLEOTIDE SEQUENCE [GENOMIC DNA]</scope>
</reference>
<reference key="2">
    <citation type="journal article" date="2005" name="Science">
        <title>The transcriptional landscape of the mammalian genome.</title>
        <authorList>
            <person name="Carninci P."/>
            <person name="Kasukawa T."/>
            <person name="Katayama S."/>
            <person name="Gough J."/>
            <person name="Frith M.C."/>
            <person name="Maeda N."/>
            <person name="Oyama R."/>
            <person name="Ravasi T."/>
            <person name="Lenhard B."/>
            <person name="Wells C."/>
            <person name="Kodzius R."/>
            <person name="Shimokawa K."/>
            <person name="Bajic V.B."/>
            <person name="Brenner S.E."/>
            <person name="Batalov S."/>
            <person name="Forrest A.R."/>
            <person name="Zavolan M."/>
            <person name="Davis M.J."/>
            <person name="Wilming L.G."/>
            <person name="Aidinis V."/>
            <person name="Allen J.E."/>
            <person name="Ambesi-Impiombato A."/>
            <person name="Apweiler R."/>
            <person name="Aturaliya R.N."/>
            <person name="Bailey T.L."/>
            <person name="Bansal M."/>
            <person name="Baxter L."/>
            <person name="Beisel K.W."/>
            <person name="Bersano T."/>
            <person name="Bono H."/>
            <person name="Chalk A.M."/>
            <person name="Chiu K.P."/>
            <person name="Choudhary V."/>
            <person name="Christoffels A."/>
            <person name="Clutterbuck D.R."/>
            <person name="Crowe M.L."/>
            <person name="Dalla E."/>
            <person name="Dalrymple B.P."/>
            <person name="de Bono B."/>
            <person name="Della Gatta G."/>
            <person name="di Bernardo D."/>
            <person name="Down T."/>
            <person name="Engstrom P."/>
            <person name="Fagiolini M."/>
            <person name="Faulkner G."/>
            <person name="Fletcher C.F."/>
            <person name="Fukushima T."/>
            <person name="Furuno M."/>
            <person name="Futaki S."/>
            <person name="Gariboldi M."/>
            <person name="Georgii-Hemming P."/>
            <person name="Gingeras T.R."/>
            <person name="Gojobori T."/>
            <person name="Green R.E."/>
            <person name="Gustincich S."/>
            <person name="Harbers M."/>
            <person name="Hayashi Y."/>
            <person name="Hensch T.K."/>
            <person name="Hirokawa N."/>
            <person name="Hill D."/>
            <person name="Huminiecki L."/>
            <person name="Iacono M."/>
            <person name="Ikeo K."/>
            <person name="Iwama A."/>
            <person name="Ishikawa T."/>
            <person name="Jakt M."/>
            <person name="Kanapin A."/>
            <person name="Katoh M."/>
            <person name="Kawasawa Y."/>
            <person name="Kelso J."/>
            <person name="Kitamura H."/>
            <person name="Kitano H."/>
            <person name="Kollias G."/>
            <person name="Krishnan S.P."/>
            <person name="Kruger A."/>
            <person name="Kummerfeld S.K."/>
            <person name="Kurochkin I.V."/>
            <person name="Lareau L.F."/>
            <person name="Lazarevic D."/>
            <person name="Lipovich L."/>
            <person name="Liu J."/>
            <person name="Liuni S."/>
            <person name="McWilliam S."/>
            <person name="Madan Babu M."/>
            <person name="Madera M."/>
            <person name="Marchionni L."/>
            <person name="Matsuda H."/>
            <person name="Matsuzawa S."/>
            <person name="Miki H."/>
            <person name="Mignone F."/>
            <person name="Miyake S."/>
            <person name="Morris K."/>
            <person name="Mottagui-Tabar S."/>
            <person name="Mulder N."/>
            <person name="Nakano N."/>
            <person name="Nakauchi H."/>
            <person name="Ng P."/>
            <person name="Nilsson R."/>
            <person name="Nishiguchi S."/>
            <person name="Nishikawa S."/>
            <person name="Nori F."/>
            <person name="Ohara O."/>
            <person name="Okazaki Y."/>
            <person name="Orlando V."/>
            <person name="Pang K.C."/>
            <person name="Pavan W.J."/>
            <person name="Pavesi G."/>
            <person name="Pesole G."/>
            <person name="Petrovsky N."/>
            <person name="Piazza S."/>
            <person name="Reed J."/>
            <person name="Reid J.F."/>
            <person name="Ring B.Z."/>
            <person name="Ringwald M."/>
            <person name="Rost B."/>
            <person name="Ruan Y."/>
            <person name="Salzberg S.L."/>
            <person name="Sandelin A."/>
            <person name="Schneider C."/>
            <person name="Schoenbach C."/>
            <person name="Sekiguchi K."/>
            <person name="Semple C.A."/>
            <person name="Seno S."/>
            <person name="Sessa L."/>
            <person name="Sheng Y."/>
            <person name="Shibata Y."/>
            <person name="Shimada H."/>
            <person name="Shimada K."/>
            <person name="Silva D."/>
            <person name="Sinclair B."/>
            <person name="Sperling S."/>
            <person name="Stupka E."/>
            <person name="Sugiura K."/>
            <person name="Sultana R."/>
            <person name="Takenaka Y."/>
            <person name="Taki K."/>
            <person name="Tammoja K."/>
            <person name="Tan S.L."/>
            <person name="Tang S."/>
            <person name="Taylor M.S."/>
            <person name="Tegner J."/>
            <person name="Teichmann S.A."/>
            <person name="Ueda H.R."/>
            <person name="van Nimwegen E."/>
            <person name="Verardo R."/>
            <person name="Wei C.L."/>
            <person name="Yagi K."/>
            <person name="Yamanishi H."/>
            <person name="Zabarovsky E."/>
            <person name="Zhu S."/>
            <person name="Zimmer A."/>
            <person name="Hide W."/>
            <person name="Bult C."/>
            <person name="Grimmond S.M."/>
            <person name="Teasdale R.D."/>
            <person name="Liu E.T."/>
            <person name="Brusic V."/>
            <person name="Quackenbush J."/>
            <person name="Wahlestedt C."/>
            <person name="Mattick J.S."/>
            <person name="Hume D.A."/>
            <person name="Kai C."/>
            <person name="Sasaki D."/>
            <person name="Tomaru Y."/>
            <person name="Fukuda S."/>
            <person name="Kanamori-Katayama M."/>
            <person name="Suzuki M."/>
            <person name="Aoki J."/>
            <person name="Arakawa T."/>
            <person name="Iida J."/>
            <person name="Imamura K."/>
            <person name="Itoh M."/>
            <person name="Kato T."/>
            <person name="Kawaji H."/>
            <person name="Kawagashira N."/>
            <person name="Kawashima T."/>
            <person name="Kojima M."/>
            <person name="Kondo S."/>
            <person name="Konno H."/>
            <person name="Nakano K."/>
            <person name="Ninomiya N."/>
            <person name="Nishio T."/>
            <person name="Okada M."/>
            <person name="Plessy C."/>
            <person name="Shibata K."/>
            <person name="Shiraki T."/>
            <person name="Suzuki S."/>
            <person name="Tagami M."/>
            <person name="Waki K."/>
            <person name="Watahiki A."/>
            <person name="Okamura-Oho Y."/>
            <person name="Suzuki H."/>
            <person name="Kawai J."/>
            <person name="Hayashizaki Y."/>
        </authorList>
    </citation>
    <scope>NUCLEOTIDE SEQUENCE [LARGE SCALE MRNA]</scope>
    <source>
        <strain evidence="17">C57BL/6J</strain>
        <tissue evidence="17">Embryo</tissue>
    </source>
</reference>
<reference key="3">
    <citation type="journal article" date="2009" name="PLoS Biol.">
        <title>Lineage-specific biology revealed by a finished genome assembly of the mouse.</title>
        <authorList>
            <person name="Church D.M."/>
            <person name="Goodstadt L."/>
            <person name="Hillier L.W."/>
            <person name="Zody M.C."/>
            <person name="Goldstein S."/>
            <person name="She X."/>
            <person name="Bult C.J."/>
            <person name="Agarwala R."/>
            <person name="Cherry J.L."/>
            <person name="DiCuccio M."/>
            <person name="Hlavina W."/>
            <person name="Kapustin Y."/>
            <person name="Meric P."/>
            <person name="Maglott D."/>
            <person name="Birtle Z."/>
            <person name="Marques A.C."/>
            <person name="Graves T."/>
            <person name="Zhou S."/>
            <person name="Teague B."/>
            <person name="Potamousis K."/>
            <person name="Churas C."/>
            <person name="Place M."/>
            <person name="Herschleb J."/>
            <person name="Runnheim R."/>
            <person name="Forrest D."/>
            <person name="Amos-Landgraf J."/>
            <person name="Schwartz D.C."/>
            <person name="Cheng Z."/>
            <person name="Lindblad-Toh K."/>
            <person name="Eichler E.E."/>
            <person name="Ponting C.P."/>
        </authorList>
    </citation>
    <scope>NUCLEOTIDE SEQUENCE [LARGE SCALE GENOMIC DNA]</scope>
    <source>
        <strain>C57BL/6J</strain>
    </source>
</reference>
<reference key="4">
    <citation type="journal article" date="2004" name="Genome Res.">
        <title>The status, quality, and expansion of the NIH full-length cDNA project: the Mammalian Gene Collection (MGC).</title>
        <authorList>
            <consortium name="The MGC Project Team"/>
        </authorList>
    </citation>
    <scope>NUCLEOTIDE SEQUENCE [LARGE SCALE MRNA]</scope>
    <source>
        <strain evidence="15 16">C57BL/6J</strain>
        <tissue evidence="15 16">Brain</tissue>
    </source>
</reference>
<reference key="5">
    <citation type="journal article" date="1981" name="J. Biol. Chem.">
        <title>Quantitative determination of histone modification. H2A acetylation and phosphorylation.</title>
        <authorList>
            <person name="Pantazis P."/>
            <person name="Bonner W.M."/>
        </authorList>
    </citation>
    <scope>PHOSPHORYLATION AT SER-2</scope>
    <scope>ACETYLATION AT SER-2 AND LYS-6</scope>
</reference>
<reference key="6">
    <citation type="journal article" date="2004" name="Dev. Cell">
        <title>Polycomb group proteins Ring1A/B link ubiquitylation of histone H2A to heritable gene silencing and X inactivation.</title>
        <authorList>
            <person name="de Napoles M."/>
            <person name="Mermoud J.E."/>
            <person name="Wakao R."/>
            <person name="Tang Y.A."/>
            <person name="Endoh M."/>
            <person name="Appanah R."/>
            <person name="Nesterova T.B."/>
            <person name="Silva J."/>
            <person name="Otte A.P."/>
            <person name="Vidal M."/>
            <person name="Koseki H."/>
            <person name="Brockdorff N."/>
        </authorList>
    </citation>
    <scope>UBIQUITINATION AT LYS-120</scope>
</reference>
<reference key="7">
    <citation type="journal article" date="2004" name="J. Biol. Chem.">
        <title>Ring1b-mediated H2A ubiquitination associates with inactive X chromosomes and is involved in initiation of X inactivation.</title>
        <authorList>
            <person name="Fang J."/>
            <person name="Chen T."/>
            <person name="Chadwick B."/>
            <person name="Li E."/>
            <person name="Zhang Y."/>
        </authorList>
    </citation>
    <scope>UBIQUITINATION AT LYS-120</scope>
</reference>
<reference key="8">
    <citation type="journal article" date="2006" name="Nat. Cell Biol.">
        <title>Blimp1 associates with Prmt5 and directs histone arginine methylation in mouse germ cells.</title>
        <authorList>
            <person name="Ancelin K."/>
            <person name="Lange U.C."/>
            <person name="Hajkova P."/>
            <person name="Schneider R."/>
            <person name="Bannister A.J."/>
            <person name="Kouzarides T."/>
            <person name="Surani M.A."/>
        </authorList>
    </citation>
    <scope>METHYLATION AT ARG-4</scope>
</reference>
<reference key="9">
    <citation type="journal article" date="2011" name="Cell">
        <title>Identification of 67 histone marks and histone lysine crotonylation as a new type of histone modification.</title>
        <authorList>
            <person name="Tan M."/>
            <person name="Luo H."/>
            <person name="Lee S."/>
            <person name="Jin F."/>
            <person name="Yang J.S."/>
            <person name="Montellier E."/>
            <person name="Buchou T."/>
            <person name="Cheng Z."/>
            <person name="Rousseaux S."/>
            <person name="Rajagopal N."/>
            <person name="Lu Z."/>
            <person name="Ye Z."/>
            <person name="Zhu Q."/>
            <person name="Wysocka J."/>
            <person name="Ye Y."/>
            <person name="Khochbin S."/>
            <person name="Ren B."/>
            <person name="Zhao Y."/>
        </authorList>
    </citation>
    <scope>CROTONYLATION AT LYS-37 AND LYS-119</scope>
</reference>
<reference key="10">
    <citation type="journal article" date="2014" name="Nat. Chem. Biol.">
        <title>Lysine 2-hydroxyisobutyrylation is a widely distributed active histone mark.</title>
        <authorList>
            <person name="Dai L."/>
            <person name="Peng C."/>
            <person name="Montellier E."/>
            <person name="Lu Z."/>
            <person name="Chen Y."/>
            <person name="Ishii H."/>
            <person name="Debernardi A."/>
            <person name="Buchou T."/>
            <person name="Rousseaux S."/>
            <person name="Jin F."/>
            <person name="Sabari B.R."/>
            <person name="Deng Z."/>
            <person name="Allis C.D."/>
            <person name="Ren B."/>
            <person name="Khochbin S."/>
            <person name="Zhao Y."/>
        </authorList>
    </citation>
    <scope>HYDROXYBUTYRYLATION AT LYS-6; LYS-10; LYS-37; LYS-75; LYS-76; LYS-96 AND LYS-119</scope>
</reference>
<reference key="11">
    <citation type="journal article" date="2014" name="Nature">
        <title>Glutamine methylation in histone H2A is an RNA-polymerase-I-dedicated modification.</title>
        <authorList>
            <person name="Tessarz P."/>
            <person name="Santos-Rosa H."/>
            <person name="Robson S.C."/>
            <person name="Sylvestersen K.B."/>
            <person name="Nelson C.J."/>
            <person name="Nielsen M.L."/>
            <person name="Kouzarides T."/>
        </authorList>
    </citation>
    <scope>METHYLATION AT GLN-105</scope>
</reference>
<reference key="12">
    <citation type="journal article" date="2016" name="Mol. Cell">
        <title>Metabolic regulation of gene expression by histone lysine beta-hydroxybutyrylation.</title>
        <authorList>
            <person name="Xie Z."/>
            <person name="Zhang D."/>
            <person name="Chung D."/>
            <person name="Tang Z."/>
            <person name="Huang H."/>
            <person name="Dai L."/>
            <person name="Qi S."/>
            <person name="Li J."/>
            <person name="Colak G."/>
            <person name="Chen Y."/>
            <person name="Xia C."/>
            <person name="Peng C."/>
            <person name="Ruan H."/>
            <person name="Kirkey M."/>
            <person name="Wang D."/>
            <person name="Jensen L.M."/>
            <person name="Kwon O.K."/>
            <person name="Lee S."/>
            <person name="Pletcher S.D."/>
            <person name="Tan M."/>
            <person name="Lombard D.B."/>
            <person name="White K.P."/>
            <person name="Zhao H."/>
            <person name="Li J."/>
            <person name="Roeder R.G."/>
            <person name="Yang X."/>
            <person name="Zhao Y."/>
        </authorList>
    </citation>
    <scope>HYDROXYBUTYRYLATION AT LYS-6; LYS-37; LYS-120 AND LYS-126</scope>
</reference>
<keyword id="KW-0007">Acetylation</keyword>
<keyword id="KW-0158">Chromosome</keyword>
<keyword id="KW-0164">Citrullination</keyword>
<keyword id="KW-0238">DNA-binding</keyword>
<keyword id="KW-0379">Hydroxylation</keyword>
<keyword id="KW-1017">Isopeptide bond</keyword>
<keyword id="KW-0488">Methylation</keyword>
<keyword id="KW-0544">Nucleosome core</keyword>
<keyword id="KW-0539">Nucleus</keyword>
<keyword id="KW-0597">Phosphoprotein</keyword>
<keyword id="KW-1185">Reference proteome</keyword>
<keyword id="KW-0832">Ubl conjugation</keyword>
<comment type="function">
    <text>Core component of nucleosome. Nucleosomes wrap and compact DNA into chromatin, limiting DNA accessibility to the cellular machineries which require DNA as a template. Histones thereby play a central role in transcription regulation, DNA repair, DNA replication and chromosomal stability. DNA accessibility is regulated via a complex set of post-translational modifications of histones, also called histone code, and nucleosome remodeling.</text>
</comment>
<comment type="subunit">
    <text>The nucleosome is a histone octamer containing two molecules each of H2A, H2B, H3 and H4 assembled in one H3-H4 heterotetramer and two H2A-H2B heterodimers. The octamer wraps approximately 147 bp of DNA.</text>
</comment>
<comment type="subcellular location">
    <subcellularLocation>
        <location>Nucleus</location>
    </subcellularLocation>
    <subcellularLocation>
        <location>Chromosome</location>
    </subcellularLocation>
</comment>
<comment type="PTM">
    <text evidence="3">Deiminated on Arg-4 in granulocytes upon calcium entry.</text>
</comment>
<comment type="PTM">
    <text evidence="3 6 7 10">Monoubiquitination of Lys-120 (H2AK119Ub) by RING1, TRIM37 and RNF2/RING2 complex gives a specific tag for epigenetic transcriptional repression and participates in X chromosome inactivation of female mammals. It is involved in the initiation of both imprinted and random X inactivation. Ubiquitinated H2A is enriched in inactive X chromosome chromatin. Ubiquitination of H2A functions downstream of methylation of 'Lys-27' of histone H3 (H3K27me). H2AK119Ub by RNF2/RING2 can also be induced by ultraviolet and may be involved in DNA repair. Following DNA double-strand breaks (DSBs), it is ubiquitinated through 'Lys-63' linkage of ubiquitin moieties by the E2 ligase UBE2N and the E3 ligases RNF8 and RNF168, leading to the recruitment of repair proteins to sites of DNA damage. Ubiquitination at Lys-14 and Lys-16 (H2AK13Ub and H2AK15Ub, respectively) in response to DNA damage is initiated by RNF168 that mediates monoubiquitination at these 2 sites, and 'Lys-63'-linked ubiquitin are then conjugated to monoubiquitin; RNF8 is able to extend 'Lys-63'-linked ubiquitin chains in vitro. Deubiquitinated by USP51 at Lys-14 and Lys-16 (H2AK13Ub and H2AK15Ub, respectively) after damaged DNA is repaired (By similarity). H2AK119Ub and ionizing radiation-induced 'Lys-63'-linked ubiquitination (H2AK13Ub and H2AK15Ub) are distinct events.</text>
</comment>
<comment type="PTM">
    <text evidence="3 13">Phosphorylation on Ser-2 (H2AS1ph) is enhanced during mitosis. Phosphorylation on Ser-2 by RPS6KA5/MSK1 directly represses transcription. Acetylation of H3 inhibits Ser-2 phosphorylation by RPS6KA5/MSK1. Phosphorylation at Thr-121 (H2AT120ph) by DCAF1 is present in the regulatory region of many tumor suppresor genes and down-regulates their transcription.</text>
</comment>
<comment type="PTM">
    <text evidence="8">Symmetric dimethylation on Arg-4 by the PRDM1/PRMT5 complex may play a crucial role in the germ-cell lineage.</text>
</comment>
<comment type="PTM">
    <text evidence="10">Glutamine methylation at Gln-105 (H2AQ104me) by FBL is specifically dedicated to polymerase I. It is present at 35S ribosomal DNA locus and impairs binding of the FACT complex.</text>
</comment>
<comment type="PTM">
    <text evidence="9">Crotonylation (Kcr) is specifically present in male germ cells and marks testis-specific genes in post-meiotic cells, including X-linked genes that escape sex chromosome inactivation in haploid cells. Crotonylation marks active promoters and enhancers and confers resistance to transcriptional repressors. It is also associated with post-meiotically activated genes on autosomes.</text>
</comment>
<comment type="PTM">
    <text evidence="12">Hydroxybutyrylation of histones is induced by starvation.</text>
</comment>
<comment type="PTM">
    <text evidence="2">Lactylated in macrophages by EP300/P300 by using lactoyl-CoA directly derived from endogenous or exogenous lactate, leading to stimulates gene transcription.</text>
</comment>
<comment type="similarity">
    <text evidence="14">Belongs to the histone H2A family.</text>
</comment>
<gene>
    <name evidence="18" type="primary">H2ac8</name>
    <name evidence="18" type="synonym">Hist1h2ae</name>
</gene>
<proteinExistence type="evidence at protein level"/>